<sequence length="270" mass="29683">MTPPSRTVLIVSDHTGLTAETTARALLAHFPSQSLKYLQRPFVASVEVARGVAREVAALAERGERPLIFTTITEPAVMRELEAAPARVFDLLGPGLIALEHEFGEKAARSVGRYHDMHDQTSYLARMDALDFALATDDGLGDRQYGLADVILVGVSRAGKTPTSLFLALQHSVRASNYPLAEDDFERESLPIPLEPHRAKLHGLTIDPRRLHAIRTQRKPGSRYASLEQCEYEVRQAERLFGRAGIPVRDTTSASVEEIAAGILAQLRRG</sequence>
<gene>
    <name type="ordered locus">Dgeo_0622</name>
</gene>
<accession>Q1J0R0</accession>
<dbReference type="EC" id="2.7.11.33" evidence="1"/>
<dbReference type="EC" id="2.7.4.28" evidence="1"/>
<dbReference type="EMBL" id="CP000359">
    <property type="protein sequence ID" value="ABF44924.1"/>
    <property type="molecule type" value="Genomic_DNA"/>
</dbReference>
<dbReference type="RefSeq" id="WP_011529765.1">
    <property type="nucleotide sequence ID" value="NC_008025.1"/>
</dbReference>
<dbReference type="SMR" id="Q1J0R0"/>
<dbReference type="STRING" id="319795.Dgeo_0622"/>
<dbReference type="KEGG" id="dge:Dgeo_0622"/>
<dbReference type="eggNOG" id="COG1806">
    <property type="taxonomic scope" value="Bacteria"/>
</dbReference>
<dbReference type="HOGENOM" id="CLU_046206_1_0_0"/>
<dbReference type="Proteomes" id="UP000002431">
    <property type="component" value="Chromosome"/>
</dbReference>
<dbReference type="GO" id="GO:0043531">
    <property type="term" value="F:ADP binding"/>
    <property type="evidence" value="ECO:0007669"/>
    <property type="project" value="UniProtKB-UniRule"/>
</dbReference>
<dbReference type="GO" id="GO:0005524">
    <property type="term" value="F:ATP binding"/>
    <property type="evidence" value="ECO:0007669"/>
    <property type="project" value="InterPro"/>
</dbReference>
<dbReference type="GO" id="GO:0016776">
    <property type="term" value="F:phosphotransferase activity, phosphate group as acceptor"/>
    <property type="evidence" value="ECO:0007669"/>
    <property type="project" value="UniProtKB-UniRule"/>
</dbReference>
<dbReference type="GO" id="GO:0004674">
    <property type="term" value="F:protein serine/threonine kinase activity"/>
    <property type="evidence" value="ECO:0007669"/>
    <property type="project" value="UniProtKB-UniRule"/>
</dbReference>
<dbReference type="HAMAP" id="MF_01062">
    <property type="entry name" value="PSRP"/>
    <property type="match status" value="1"/>
</dbReference>
<dbReference type="InterPro" id="IPR005177">
    <property type="entry name" value="Kinase-pyrophosphorylase"/>
</dbReference>
<dbReference type="InterPro" id="IPR026530">
    <property type="entry name" value="PSRP"/>
</dbReference>
<dbReference type="NCBIfam" id="NF003742">
    <property type="entry name" value="PRK05339.1"/>
    <property type="match status" value="1"/>
</dbReference>
<dbReference type="PANTHER" id="PTHR31756">
    <property type="entry name" value="PYRUVATE, PHOSPHATE DIKINASE REGULATORY PROTEIN 1, CHLOROPLASTIC"/>
    <property type="match status" value="1"/>
</dbReference>
<dbReference type="PANTHER" id="PTHR31756:SF3">
    <property type="entry name" value="PYRUVATE, PHOSPHATE DIKINASE REGULATORY PROTEIN 1, CHLOROPLASTIC"/>
    <property type="match status" value="1"/>
</dbReference>
<dbReference type="Pfam" id="PF03618">
    <property type="entry name" value="Kinase-PPPase"/>
    <property type="match status" value="1"/>
</dbReference>
<name>PSRP_DEIGD</name>
<evidence type="ECO:0000255" key="1">
    <source>
        <dbReference type="HAMAP-Rule" id="MF_01062"/>
    </source>
</evidence>
<reference key="1">
    <citation type="submission" date="2006-04" db="EMBL/GenBank/DDBJ databases">
        <title>Complete sequence of chromosome of Deinococcus geothermalis DSM 11300.</title>
        <authorList>
            <person name="Copeland A."/>
            <person name="Lucas S."/>
            <person name="Lapidus A."/>
            <person name="Barry K."/>
            <person name="Detter J.C."/>
            <person name="Glavina del Rio T."/>
            <person name="Hammon N."/>
            <person name="Israni S."/>
            <person name="Dalin E."/>
            <person name="Tice H."/>
            <person name="Pitluck S."/>
            <person name="Brettin T."/>
            <person name="Bruce D."/>
            <person name="Han C."/>
            <person name="Tapia R."/>
            <person name="Saunders E."/>
            <person name="Gilna P."/>
            <person name="Schmutz J."/>
            <person name="Larimer F."/>
            <person name="Land M."/>
            <person name="Hauser L."/>
            <person name="Kyrpides N."/>
            <person name="Kim E."/>
            <person name="Daly M.J."/>
            <person name="Fredrickson J.K."/>
            <person name="Makarova K.S."/>
            <person name="Gaidamakova E.K."/>
            <person name="Zhai M."/>
            <person name="Richardson P."/>
        </authorList>
    </citation>
    <scope>NUCLEOTIDE SEQUENCE [LARGE SCALE GENOMIC DNA]</scope>
    <source>
        <strain>DSM 11300 / CIP 105573 / AG-3a</strain>
    </source>
</reference>
<feature type="chain" id="PRO_0000316665" description="Putative phosphoenolpyruvate synthase regulatory protein">
    <location>
        <begin position="1"/>
        <end position="270"/>
    </location>
</feature>
<feature type="binding site" evidence="1">
    <location>
        <begin position="154"/>
        <end position="161"/>
    </location>
    <ligand>
        <name>ADP</name>
        <dbReference type="ChEBI" id="CHEBI:456216"/>
    </ligand>
</feature>
<protein>
    <recommendedName>
        <fullName evidence="1">Putative phosphoenolpyruvate synthase regulatory protein</fullName>
        <shortName evidence="1">PEP synthase regulatory protein</shortName>
        <shortName evidence="1">PSRP</shortName>
        <ecNumber evidence="1">2.7.11.33</ecNumber>
        <ecNumber evidence="1">2.7.4.28</ecNumber>
    </recommendedName>
    <alternativeName>
        <fullName evidence="1">Pyruvate, water dikinase regulatory protein</fullName>
    </alternativeName>
</protein>
<proteinExistence type="inferred from homology"/>
<keyword id="KW-0418">Kinase</keyword>
<keyword id="KW-0547">Nucleotide-binding</keyword>
<keyword id="KW-0723">Serine/threonine-protein kinase</keyword>
<keyword id="KW-0808">Transferase</keyword>
<organism>
    <name type="scientific">Deinococcus geothermalis (strain DSM 11300 / CIP 105573 / AG-3a)</name>
    <dbReference type="NCBI Taxonomy" id="319795"/>
    <lineage>
        <taxon>Bacteria</taxon>
        <taxon>Thermotogati</taxon>
        <taxon>Deinococcota</taxon>
        <taxon>Deinococci</taxon>
        <taxon>Deinococcales</taxon>
        <taxon>Deinococcaceae</taxon>
        <taxon>Deinococcus</taxon>
    </lineage>
</organism>
<comment type="function">
    <text evidence="1">Bifunctional serine/threonine kinase and phosphorylase involved in the regulation of the phosphoenolpyruvate synthase (PEPS) by catalyzing its phosphorylation/dephosphorylation.</text>
</comment>
<comment type="catalytic activity">
    <reaction evidence="1">
        <text>[pyruvate, water dikinase] + ADP = [pyruvate, water dikinase]-phosphate + AMP + H(+)</text>
        <dbReference type="Rhea" id="RHEA:46020"/>
        <dbReference type="Rhea" id="RHEA-COMP:11425"/>
        <dbReference type="Rhea" id="RHEA-COMP:11426"/>
        <dbReference type="ChEBI" id="CHEBI:15378"/>
        <dbReference type="ChEBI" id="CHEBI:43176"/>
        <dbReference type="ChEBI" id="CHEBI:68546"/>
        <dbReference type="ChEBI" id="CHEBI:456215"/>
        <dbReference type="ChEBI" id="CHEBI:456216"/>
        <dbReference type="EC" id="2.7.11.33"/>
    </reaction>
</comment>
<comment type="catalytic activity">
    <reaction evidence="1">
        <text>[pyruvate, water dikinase]-phosphate + phosphate + H(+) = [pyruvate, water dikinase] + diphosphate</text>
        <dbReference type="Rhea" id="RHEA:48580"/>
        <dbReference type="Rhea" id="RHEA-COMP:11425"/>
        <dbReference type="Rhea" id="RHEA-COMP:11426"/>
        <dbReference type="ChEBI" id="CHEBI:15378"/>
        <dbReference type="ChEBI" id="CHEBI:33019"/>
        <dbReference type="ChEBI" id="CHEBI:43176"/>
        <dbReference type="ChEBI" id="CHEBI:43474"/>
        <dbReference type="ChEBI" id="CHEBI:68546"/>
        <dbReference type="EC" id="2.7.4.28"/>
    </reaction>
</comment>
<comment type="similarity">
    <text evidence="1">Belongs to the pyruvate, phosphate/water dikinase regulatory protein family. PSRP subfamily.</text>
</comment>